<proteinExistence type="evidence at transcript level"/>
<evidence type="ECO:0000255" key="1"/>
<evidence type="ECO:0000305" key="2"/>
<reference key="1">
    <citation type="journal article" date="1994" name="Curr. Genet.">
        <title>cDNA cloning of a Sec61 homologue from the cryptomonad alga Pyrenomonas salina.</title>
        <authorList>
            <person name="Mueller S.B."/>
            <person name="Rensing S.A."/>
            <person name="Martin W.F."/>
            <person name="Maier U.-G."/>
        </authorList>
    </citation>
    <scope>NUCLEOTIDE SEQUENCE [MRNA]</scope>
</reference>
<protein>
    <recommendedName>
        <fullName>Protein transport protein Sec61 subunit alpha</fullName>
    </recommendedName>
</protein>
<organism>
    <name type="scientific">Pyrenomonas salina</name>
    <dbReference type="NCBI Taxonomy" id="3034"/>
    <lineage>
        <taxon>Eukaryota</taxon>
        <taxon>Cryptophyceae</taxon>
        <taxon>Pyrenomonadales</taxon>
        <taxon>Pyrenomonadaceae</taxon>
        <taxon>Pyrenomonas</taxon>
    </lineage>
</organism>
<comment type="function">
    <text>Appears to play a crucial role in the insertion of secretory and membrane polypeptides into the ER. It is required for assembly of membrane and secretory proteins.</text>
</comment>
<comment type="subunit">
    <text>Heterotrimeric complex composed of SEC61-alpha, SEC61-beta and SEC61-gamma.</text>
</comment>
<comment type="subcellular location">
    <subcellularLocation>
        <location>Endoplasmic reticulum membrane</location>
        <topology>Multi-pass membrane protein</topology>
    </subcellularLocation>
</comment>
<comment type="similarity">
    <text evidence="2">Belongs to the SecY/SEC61-alpha family.</text>
</comment>
<dbReference type="EMBL" id="X77805">
    <property type="protein sequence ID" value="CAA54828.1"/>
    <property type="molecule type" value="mRNA"/>
</dbReference>
<dbReference type="PIR" id="S51499">
    <property type="entry name" value="S51499"/>
</dbReference>
<dbReference type="SMR" id="P38379"/>
<dbReference type="GO" id="GO:0005789">
    <property type="term" value="C:endoplasmic reticulum membrane"/>
    <property type="evidence" value="ECO:0007669"/>
    <property type="project" value="UniProtKB-SubCell"/>
</dbReference>
<dbReference type="GO" id="GO:0015031">
    <property type="term" value="P:protein transport"/>
    <property type="evidence" value="ECO:0007669"/>
    <property type="project" value="UniProtKB-KW"/>
</dbReference>
<dbReference type="FunFam" id="1.10.3370.10:FF:000002">
    <property type="entry name" value="Transport Sec61 subunit alpha isoform 2"/>
    <property type="match status" value="1"/>
</dbReference>
<dbReference type="Gene3D" id="1.10.3370.10">
    <property type="entry name" value="SecY subunit domain"/>
    <property type="match status" value="1"/>
</dbReference>
<dbReference type="InterPro" id="IPR002208">
    <property type="entry name" value="SecY/SEC61-alpha"/>
</dbReference>
<dbReference type="InterPro" id="IPR030659">
    <property type="entry name" value="SecY_CS"/>
</dbReference>
<dbReference type="InterPro" id="IPR023201">
    <property type="entry name" value="SecY_dom_sf"/>
</dbReference>
<dbReference type="InterPro" id="IPR019561">
    <property type="entry name" value="Translocon_Sec61/SecY_plug_dom"/>
</dbReference>
<dbReference type="NCBIfam" id="TIGR00967">
    <property type="entry name" value="3a0501s007"/>
    <property type="match status" value="1"/>
</dbReference>
<dbReference type="NCBIfam" id="NF006341">
    <property type="entry name" value="PRK08568.1-5"/>
    <property type="match status" value="1"/>
</dbReference>
<dbReference type="PANTHER" id="PTHR10906">
    <property type="entry name" value="SECY/SEC61-ALPHA FAMILY MEMBER"/>
    <property type="match status" value="1"/>
</dbReference>
<dbReference type="Pfam" id="PF10559">
    <property type="entry name" value="Plug_translocon"/>
    <property type="match status" value="1"/>
</dbReference>
<dbReference type="Pfam" id="PF00344">
    <property type="entry name" value="SecY"/>
    <property type="match status" value="1"/>
</dbReference>
<dbReference type="PIRSF" id="PIRSF004557">
    <property type="entry name" value="SecY"/>
    <property type="match status" value="1"/>
</dbReference>
<dbReference type="SUPFAM" id="SSF103491">
    <property type="entry name" value="Preprotein translocase SecY subunit"/>
    <property type="match status" value="1"/>
</dbReference>
<dbReference type="PROSITE" id="PS00755">
    <property type="entry name" value="SECY_1"/>
    <property type="match status" value="1"/>
</dbReference>
<accession>P38379</accession>
<keyword id="KW-0256">Endoplasmic reticulum</keyword>
<keyword id="KW-0472">Membrane</keyword>
<keyword id="KW-0653">Protein transport</keyword>
<keyword id="KW-0811">Translocation</keyword>
<keyword id="KW-0812">Transmembrane</keyword>
<keyword id="KW-1133">Transmembrane helix</keyword>
<keyword id="KW-0813">Transport</keyword>
<sequence>MGTSGVRFLTLVKPFMFALPEVSSATKKIPVNEKLLWTSIVVFLYLVCCQIPLYGITNTKSSDPFYWMRVILASNKGTLMELGISPIVTSGLVMQLLAGSKIIDVDQGTKEDKTLFQGAQKLLGILITIGESVAYVLSGMYGDVKDLGAGNAILIIVQLFTSGIIVICLDELLQKGYGIGSAISLFIATNVCESIVWKSFSPTTINTGRGTEFEGALVALFQLMITKTDKVRALQEAFYRQNLPNVTNLLATVLVFVLVVYFQGFQVELPITPAKSKGMAGQFYPIKLFYTSNMPIILQTALVSNLYFISQILYKRYPENIIIHILGRWEEPEMSVSGQMRPVGGIAYYISPLNSFAEIVSDPVHALLYIIFILASCALFSKTWIQVSGTSASDVSKQLRDQQMVMKGFRASSMQRELNRYIPTAAAFGGMCIGALSIVADFMGAIGSGTGILLAVTTIYQSWETILLAVTTIYQSWETIRKESRDTDALKMFG</sequence>
<name>SC61A_PYRSA</name>
<feature type="chain" id="PRO_0000131810" description="Protein transport protein Sec61 subunit alpha">
    <location>
        <begin position="1"/>
        <end position="494"/>
    </location>
</feature>
<feature type="transmembrane region" description="Helical" evidence="1">
    <location>
        <begin position="36"/>
        <end position="56"/>
    </location>
</feature>
<feature type="transmembrane region" description="Helical" evidence="1">
    <location>
        <begin position="79"/>
        <end position="99"/>
    </location>
</feature>
<feature type="transmembrane region" description="Helical" evidence="1">
    <location>
        <begin position="122"/>
        <end position="142"/>
    </location>
</feature>
<feature type="transmembrane region" description="Helical" evidence="1">
    <location>
        <begin position="147"/>
        <end position="167"/>
    </location>
</feature>
<feature type="transmembrane region" description="Helical" evidence="1">
    <location>
        <begin position="177"/>
        <end position="197"/>
    </location>
</feature>
<feature type="transmembrane region" description="Helical" evidence="1">
    <location>
        <begin position="249"/>
        <end position="269"/>
    </location>
</feature>
<feature type="transmembrane region" description="Helical" evidence="1">
    <location>
        <begin position="294"/>
        <end position="314"/>
    </location>
</feature>
<feature type="transmembrane region" description="Helical" evidence="1">
    <location>
        <begin position="359"/>
        <end position="379"/>
    </location>
</feature>
<feature type="transmembrane region" description="Helical" evidence="1">
    <location>
        <begin position="426"/>
        <end position="446"/>
    </location>
</feature>
<feature type="transmembrane region" description="Helical" evidence="1">
    <location>
        <begin position="450"/>
        <end position="470"/>
    </location>
</feature>